<proteinExistence type="inferred from homology"/>
<accession>A4JEL4</accession>
<reference key="1">
    <citation type="submission" date="2007-03" db="EMBL/GenBank/DDBJ databases">
        <title>Complete sequence of chromosome 1 of Burkholderia vietnamiensis G4.</title>
        <authorList>
            <consortium name="US DOE Joint Genome Institute"/>
            <person name="Copeland A."/>
            <person name="Lucas S."/>
            <person name="Lapidus A."/>
            <person name="Barry K."/>
            <person name="Detter J.C."/>
            <person name="Glavina del Rio T."/>
            <person name="Hammon N."/>
            <person name="Israni S."/>
            <person name="Dalin E."/>
            <person name="Tice H."/>
            <person name="Pitluck S."/>
            <person name="Chain P."/>
            <person name="Malfatti S."/>
            <person name="Shin M."/>
            <person name="Vergez L."/>
            <person name="Schmutz J."/>
            <person name="Larimer F."/>
            <person name="Land M."/>
            <person name="Hauser L."/>
            <person name="Kyrpides N."/>
            <person name="Tiedje J."/>
            <person name="Richardson P."/>
        </authorList>
    </citation>
    <scope>NUCLEOTIDE SEQUENCE [LARGE SCALE GENOMIC DNA]</scope>
    <source>
        <strain>G4 / LMG 22486</strain>
    </source>
</reference>
<feature type="chain" id="PRO_0000374747" description="Ribosomal protein uS12 methylthiotransferase RimO">
    <location>
        <begin position="1"/>
        <end position="453"/>
    </location>
</feature>
<feature type="domain" description="MTTase N-terminal" evidence="1">
    <location>
        <begin position="5"/>
        <end position="120"/>
    </location>
</feature>
<feature type="domain" description="Radical SAM core" evidence="2">
    <location>
        <begin position="137"/>
        <end position="382"/>
    </location>
</feature>
<feature type="domain" description="TRAM" evidence="1">
    <location>
        <begin position="385"/>
        <end position="453"/>
    </location>
</feature>
<feature type="binding site" evidence="1">
    <location>
        <position position="14"/>
    </location>
    <ligand>
        <name>[4Fe-4S] cluster</name>
        <dbReference type="ChEBI" id="CHEBI:49883"/>
        <label>1</label>
    </ligand>
</feature>
<feature type="binding site" evidence="1">
    <location>
        <position position="50"/>
    </location>
    <ligand>
        <name>[4Fe-4S] cluster</name>
        <dbReference type="ChEBI" id="CHEBI:49883"/>
        <label>1</label>
    </ligand>
</feature>
<feature type="binding site" evidence="1">
    <location>
        <position position="79"/>
    </location>
    <ligand>
        <name>[4Fe-4S] cluster</name>
        <dbReference type="ChEBI" id="CHEBI:49883"/>
        <label>1</label>
    </ligand>
</feature>
<feature type="binding site" evidence="1">
    <location>
        <position position="151"/>
    </location>
    <ligand>
        <name>[4Fe-4S] cluster</name>
        <dbReference type="ChEBI" id="CHEBI:49883"/>
        <label>2</label>
        <note>4Fe-4S-S-AdoMet</note>
    </ligand>
</feature>
<feature type="binding site" evidence="1">
    <location>
        <position position="155"/>
    </location>
    <ligand>
        <name>[4Fe-4S] cluster</name>
        <dbReference type="ChEBI" id="CHEBI:49883"/>
        <label>2</label>
        <note>4Fe-4S-S-AdoMet</note>
    </ligand>
</feature>
<feature type="binding site" evidence="1">
    <location>
        <position position="158"/>
    </location>
    <ligand>
        <name>[4Fe-4S] cluster</name>
        <dbReference type="ChEBI" id="CHEBI:49883"/>
        <label>2</label>
        <note>4Fe-4S-S-AdoMet</note>
    </ligand>
</feature>
<keyword id="KW-0004">4Fe-4S</keyword>
<keyword id="KW-0963">Cytoplasm</keyword>
<keyword id="KW-0408">Iron</keyword>
<keyword id="KW-0411">Iron-sulfur</keyword>
<keyword id="KW-0479">Metal-binding</keyword>
<keyword id="KW-0949">S-adenosyl-L-methionine</keyword>
<keyword id="KW-0808">Transferase</keyword>
<sequence length="453" mass="49447">MSQSPKVGFVSLGCPKALVDSEQIITQLRAEGYEISGTYDGADLVVVNTCGFIDEAVQESLDAIGEALTENGKVIVTGCLGAKSSASGSNLIEEVHPKVLAVTGPHAVGEVMQAVHSHLPKPHDPFVDLVPAAGIKLTPRHYAYLKISEGCNHRCTFCIIPSMRGDLVSRPVAEVMLEAENLFKSGVKELLVISQDTSAYGVDVKYRTGFWNGKPIKTRMTDLVAALGELAAQYGAWVRLHYVYPYPSVDEVIPLMAEGPFKGHVLPYLDVPFQHAHPDVLKRMKRPANAEKVLERVQKWREICPDLTIRSTFIAGFPGETEAQFETLLDFIREAELDRVGCFAYSPVEGATANELDGALPDDVREERRARFMEVAEEVSARRMQRKVGKTLKVLIDEVGNEGGIGRTAADAPEIDGVVYVEPAAKASKRYKVGDFVSVKITGADGHDLWGEV</sequence>
<evidence type="ECO:0000255" key="1">
    <source>
        <dbReference type="HAMAP-Rule" id="MF_01865"/>
    </source>
</evidence>
<evidence type="ECO:0000255" key="2">
    <source>
        <dbReference type="PROSITE-ProRule" id="PRU01266"/>
    </source>
</evidence>
<dbReference type="EC" id="2.8.4.4" evidence="1"/>
<dbReference type="EMBL" id="CP000614">
    <property type="protein sequence ID" value="ABO54717.1"/>
    <property type="molecule type" value="Genomic_DNA"/>
</dbReference>
<dbReference type="SMR" id="A4JEL4"/>
<dbReference type="KEGG" id="bvi:Bcep1808_1713"/>
<dbReference type="eggNOG" id="COG0621">
    <property type="taxonomic scope" value="Bacteria"/>
</dbReference>
<dbReference type="HOGENOM" id="CLU_018697_0_0_4"/>
<dbReference type="Proteomes" id="UP000002287">
    <property type="component" value="Chromosome 1"/>
</dbReference>
<dbReference type="GO" id="GO:0005829">
    <property type="term" value="C:cytosol"/>
    <property type="evidence" value="ECO:0007669"/>
    <property type="project" value="TreeGrafter"/>
</dbReference>
<dbReference type="GO" id="GO:0051539">
    <property type="term" value="F:4 iron, 4 sulfur cluster binding"/>
    <property type="evidence" value="ECO:0007669"/>
    <property type="project" value="UniProtKB-UniRule"/>
</dbReference>
<dbReference type="GO" id="GO:0035599">
    <property type="term" value="F:aspartic acid methylthiotransferase activity"/>
    <property type="evidence" value="ECO:0007669"/>
    <property type="project" value="TreeGrafter"/>
</dbReference>
<dbReference type="GO" id="GO:0046872">
    <property type="term" value="F:metal ion binding"/>
    <property type="evidence" value="ECO:0007669"/>
    <property type="project" value="UniProtKB-KW"/>
</dbReference>
<dbReference type="GO" id="GO:0103039">
    <property type="term" value="F:protein methylthiotransferase activity"/>
    <property type="evidence" value="ECO:0007669"/>
    <property type="project" value="UniProtKB-EC"/>
</dbReference>
<dbReference type="GO" id="GO:0006400">
    <property type="term" value="P:tRNA modification"/>
    <property type="evidence" value="ECO:0007669"/>
    <property type="project" value="InterPro"/>
</dbReference>
<dbReference type="CDD" id="cd01335">
    <property type="entry name" value="Radical_SAM"/>
    <property type="match status" value="1"/>
</dbReference>
<dbReference type="FunFam" id="3.40.50.12160:FF:000002">
    <property type="entry name" value="Ribosomal protein S12 methylthiotransferase RimO"/>
    <property type="match status" value="1"/>
</dbReference>
<dbReference type="FunFam" id="3.80.30.20:FF:000001">
    <property type="entry name" value="tRNA-2-methylthio-N(6)-dimethylallyladenosine synthase 2"/>
    <property type="match status" value="1"/>
</dbReference>
<dbReference type="Gene3D" id="3.40.50.12160">
    <property type="entry name" value="Methylthiotransferase, N-terminal domain"/>
    <property type="match status" value="1"/>
</dbReference>
<dbReference type="Gene3D" id="2.40.50.140">
    <property type="entry name" value="Nucleic acid-binding proteins"/>
    <property type="match status" value="1"/>
</dbReference>
<dbReference type="Gene3D" id="3.80.30.20">
    <property type="entry name" value="tm_1862 like domain"/>
    <property type="match status" value="1"/>
</dbReference>
<dbReference type="HAMAP" id="MF_01865">
    <property type="entry name" value="MTTase_RimO"/>
    <property type="match status" value="1"/>
</dbReference>
<dbReference type="InterPro" id="IPR006638">
    <property type="entry name" value="Elp3/MiaA/NifB-like_rSAM"/>
</dbReference>
<dbReference type="InterPro" id="IPR005839">
    <property type="entry name" value="Methylthiotransferase"/>
</dbReference>
<dbReference type="InterPro" id="IPR020612">
    <property type="entry name" value="Methylthiotransferase_CS"/>
</dbReference>
<dbReference type="InterPro" id="IPR013848">
    <property type="entry name" value="Methylthiotransferase_N"/>
</dbReference>
<dbReference type="InterPro" id="IPR038135">
    <property type="entry name" value="Methylthiotransferase_N_sf"/>
</dbReference>
<dbReference type="InterPro" id="IPR012340">
    <property type="entry name" value="NA-bd_OB-fold"/>
</dbReference>
<dbReference type="InterPro" id="IPR005840">
    <property type="entry name" value="Ribosomal_uS12_MeSTrfase_RimO"/>
</dbReference>
<dbReference type="InterPro" id="IPR007197">
    <property type="entry name" value="rSAM"/>
</dbReference>
<dbReference type="InterPro" id="IPR023404">
    <property type="entry name" value="rSAM_horseshoe"/>
</dbReference>
<dbReference type="InterPro" id="IPR002792">
    <property type="entry name" value="TRAM_dom"/>
</dbReference>
<dbReference type="NCBIfam" id="TIGR01125">
    <property type="entry name" value="30S ribosomal protein S12 methylthiotransferase RimO"/>
    <property type="match status" value="1"/>
</dbReference>
<dbReference type="NCBIfam" id="TIGR00089">
    <property type="entry name" value="MiaB/RimO family radical SAM methylthiotransferase"/>
    <property type="match status" value="1"/>
</dbReference>
<dbReference type="PANTHER" id="PTHR43837">
    <property type="entry name" value="RIBOSOMAL PROTEIN S12 METHYLTHIOTRANSFERASE RIMO"/>
    <property type="match status" value="1"/>
</dbReference>
<dbReference type="PANTHER" id="PTHR43837:SF1">
    <property type="entry name" value="RIBOSOMAL PROTEIN US12 METHYLTHIOTRANSFERASE RIMO"/>
    <property type="match status" value="1"/>
</dbReference>
<dbReference type="Pfam" id="PF04055">
    <property type="entry name" value="Radical_SAM"/>
    <property type="match status" value="1"/>
</dbReference>
<dbReference type="Pfam" id="PF18693">
    <property type="entry name" value="TRAM_2"/>
    <property type="match status" value="1"/>
</dbReference>
<dbReference type="Pfam" id="PF00919">
    <property type="entry name" value="UPF0004"/>
    <property type="match status" value="1"/>
</dbReference>
<dbReference type="SFLD" id="SFLDG01082">
    <property type="entry name" value="B12-binding_domain_containing"/>
    <property type="match status" value="1"/>
</dbReference>
<dbReference type="SFLD" id="SFLDG01061">
    <property type="entry name" value="methylthiotransferase"/>
    <property type="match status" value="1"/>
</dbReference>
<dbReference type="SFLD" id="SFLDF00274">
    <property type="entry name" value="ribosomal_protein_S12_methylth"/>
    <property type="match status" value="1"/>
</dbReference>
<dbReference type="SMART" id="SM00729">
    <property type="entry name" value="Elp3"/>
    <property type="match status" value="1"/>
</dbReference>
<dbReference type="SUPFAM" id="SSF102114">
    <property type="entry name" value="Radical SAM enzymes"/>
    <property type="match status" value="1"/>
</dbReference>
<dbReference type="PROSITE" id="PS51449">
    <property type="entry name" value="MTTASE_N"/>
    <property type="match status" value="1"/>
</dbReference>
<dbReference type="PROSITE" id="PS01278">
    <property type="entry name" value="MTTASE_RADICAL"/>
    <property type="match status" value="1"/>
</dbReference>
<dbReference type="PROSITE" id="PS51918">
    <property type="entry name" value="RADICAL_SAM"/>
    <property type="match status" value="1"/>
</dbReference>
<dbReference type="PROSITE" id="PS50926">
    <property type="entry name" value="TRAM"/>
    <property type="match status" value="1"/>
</dbReference>
<protein>
    <recommendedName>
        <fullName evidence="1">Ribosomal protein uS12 methylthiotransferase RimO</fullName>
        <shortName evidence="1">uS12 MTTase</shortName>
        <shortName evidence="1">uS12 methylthiotransferase</shortName>
        <ecNumber evidence="1">2.8.4.4</ecNumber>
    </recommendedName>
    <alternativeName>
        <fullName evidence="1">Ribosomal protein uS12 (aspartate-C(3))-methylthiotransferase</fullName>
    </alternativeName>
    <alternativeName>
        <fullName evidence="1">Ribosome maturation factor RimO</fullName>
    </alternativeName>
</protein>
<gene>
    <name evidence="1" type="primary">rimO</name>
    <name type="ordered locus">Bcep1808_1713</name>
</gene>
<organism>
    <name type="scientific">Burkholderia vietnamiensis (strain G4 / LMG 22486)</name>
    <name type="common">Burkholderia cepacia (strain R1808)</name>
    <dbReference type="NCBI Taxonomy" id="269482"/>
    <lineage>
        <taxon>Bacteria</taxon>
        <taxon>Pseudomonadati</taxon>
        <taxon>Pseudomonadota</taxon>
        <taxon>Betaproteobacteria</taxon>
        <taxon>Burkholderiales</taxon>
        <taxon>Burkholderiaceae</taxon>
        <taxon>Burkholderia</taxon>
        <taxon>Burkholderia cepacia complex</taxon>
    </lineage>
</organism>
<name>RIMO_BURVG</name>
<comment type="function">
    <text evidence="1">Catalyzes the methylthiolation of an aspartic acid residue of ribosomal protein uS12.</text>
</comment>
<comment type="catalytic activity">
    <reaction evidence="1">
        <text>L-aspartate(89)-[ribosomal protein uS12]-hydrogen + (sulfur carrier)-SH + AH2 + 2 S-adenosyl-L-methionine = 3-methylsulfanyl-L-aspartate(89)-[ribosomal protein uS12]-hydrogen + (sulfur carrier)-H + 5'-deoxyadenosine + L-methionine + A + S-adenosyl-L-homocysteine + 2 H(+)</text>
        <dbReference type="Rhea" id="RHEA:37087"/>
        <dbReference type="Rhea" id="RHEA-COMP:10460"/>
        <dbReference type="Rhea" id="RHEA-COMP:10461"/>
        <dbReference type="Rhea" id="RHEA-COMP:14737"/>
        <dbReference type="Rhea" id="RHEA-COMP:14739"/>
        <dbReference type="ChEBI" id="CHEBI:13193"/>
        <dbReference type="ChEBI" id="CHEBI:15378"/>
        <dbReference type="ChEBI" id="CHEBI:17319"/>
        <dbReference type="ChEBI" id="CHEBI:17499"/>
        <dbReference type="ChEBI" id="CHEBI:29917"/>
        <dbReference type="ChEBI" id="CHEBI:29961"/>
        <dbReference type="ChEBI" id="CHEBI:57844"/>
        <dbReference type="ChEBI" id="CHEBI:57856"/>
        <dbReference type="ChEBI" id="CHEBI:59789"/>
        <dbReference type="ChEBI" id="CHEBI:64428"/>
        <dbReference type="ChEBI" id="CHEBI:73599"/>
        <dbReference type="EC" id="2.8.4.4"/>
    </reaction>
</comment>
<comment type="cofactor">
    <cofactor evidence="1">
        <name>[4Fe-4S] cluster</name>
        <dbReference type="ChEBI" id="CHEBI:49883"/>
    </cofactor>
    <text evidence="1">Binds 2 [4Fe-4S] clusters. One cluster is coordinated with 3 cysteines and an exchangeable S-adenosyl-L-methionine.</text>
</comment>
<comment type="subcellular location">
    <subcellularLocation>
        <location evidence="1">Cytoplasm</location>
    </subcellularLocation>
</comment>
<comment type="similarity">
    <text evidence="1">Belongs to the methylthiotransferase family. RimO subfamily.</text>
</comment>